<gene>
    <name type="primary">CAP10A</name>
</gene>
<accession>P27524</accession>
<comment type="subcellular location">
    <subcellularLocation>
        <location>Plastid</location>
        <location>Chloroplast thylakoid membrane</location>
        <topology>Multi-pass membrane protein</topology>
    </subcellularLocation>
</comment>
<comment type="similarity">
    <text evidence="2">Belongs to the ELIP/psbS family.</text>
</comment>
<proteinExistence type="inferred from homology"/>
<organism>
    <name type="scientific">Solanum lycopersicum</name>
    <name type="common">Tomato</name>
    <name type="synonym">Lycopersicon esculentum</name>
    <dbReference type="NCBI Taxonomy" id="4081"/>
    <lineage>
        <taxon>Eukaryota</taxon>
        <taxon>Viridiplantae</taxon>
        <taxon>Streptophyta</taxon>
        <taxon>Embryophyta</taxon>
        <taxon>Tracheophyta</taxon>
        <taxon>Spermatophyta</taxon>
        <taxon>Magnoliopsida</taxon>
        <taxon>eudicotyledons</taxon>
        <taxon>Gunneridae</taxon>
        <taxon>Pentapetalae</taxon>
        <taxon>asterids</taxon>
        <taxon>lamiids</taxon>
        <taxon>Solanales</taxon>
        <taxon>Solanaceae</taxon>
        <taxon>Solanoideae</taxon>
        <taxon>Solaneae</taxon>
        <taxon>Solanum</taxon>
        <taxon>Solanum subgen. Lycopersicon</taxon>
    </lineage>
</organism>
<evidence type="ECO:0000255" key="1"/>
<evidence type="ECO:0000305" key="2"/>
<reference key="1">
    <citation type="journal article" date="1990" name="Plant Mol. Biol.">
        <title>Sequence of two tomato nuclear genes encoding chlorophyll a/b-binding proteins of CP24, a PSII antenna component.</title>
        <authorList>
            <person name="Schwartz E."/>
            <person name="Pichersky E."/>
        </authorList>
    </citation>
    <scope>NUCLEOTIDE SEQUENCE [GENOMIC DNA]</scope>
</reference>
<sequence length="256" mass="27253">MATTSAAVLNGLSSSFLTGGNKSQALLAAPLAARVGGAATPKRFTVLAAAAKKSWIPAVRGGGNLVDPEWLDGSLPGDYGFDPLGLGKDPAFLKWYREAELIHGRWAMAAVLGIFVGQAWSGIPWFEAGADPGAIAPFSFGTLLGTQLILMGWVESKRWVDFFDPDSQSVEWATPWSKTAENFANFTGEQGYPGGKFFDPLALAGTLNNGVYVPDTEKLERLKVAEIKHARLAMLAMLIFYFEAGQGKTPLGALGL</sequence>
<keyword id="KW-0148">Chlorophyll</keyword>
<keyword id="KW-0150">Chloroplast</keyword>
<keyword id="KW-0157">Chromophore</keyword>
<keyword id="KW-0472">Membrane</keyword>
<keyword id="KW-0602">Photosynthesis</keyword>
<keyword id="KW-0604">Photosystem II</keyword>
<keyword id="KW-0934">Plastid</keyword>
<keyword id="KW-1185">Reference proteome</keyword>
<keyword id="KW-0793">Thylakoid</keyword>
<keyword id="KW-0809">Transit peptide</keyword>
<keyword id="KW-0812">Transmembrane</keyword>
<keyword id="KW-1133">Transmembrane helix</keyword>
<name>CB4A_SOLLC</name>
<protein>
    <recommendedName>
        <fullName>Chlorophyll a-b binding protein CP24 10A, chloroplastic</fullName>
        <shortName>CAB-10A</shortName>
        <shortName>LHCP</shortName>
    </recommendedName>
</protein>
<feature type="transit peptide" description="Chloroplast" evidence="1">
    <location>
        <begin position="1"/>
        <end status="unknown"/>
    </location>
</feature>
<feature type="chain" id="PRO_0000007811" description="Chlorophyll a-b binding protein CP24 10A, chloroplastic">
    <location>
        <begin status="unknown"/>
        <end position="256"/>
    </location>
</feature>
<feature type="transmembrane region" description="Helical" evidence="1">
    <location>
        <begin position="106"/>
        <end position="126"/>
    </location>
</feature>
<feature type="transmembrane region" description="Helical" evidence="1">
    <location>
        <begin position="134"/>
        <end position="154"/>
    </location>
</feature>
<dbReference type="EMBL" id="M32605">
    <property type="protein sequence ID" value="AAA34143.1"/>
    <property type="molecule type" value="Genomic_DNA"/>
</dbReference>
<dbReference type="PIR" id="S11877">
    <property type="entry name" value="S11877"/>
</dbReference>
<dbReference type="RefSeq" id="NP_001296324.1">
    <property type="nucleotide sequence ID" value="NM_001309395.1"/>
</dbReference>
<dbReference type="SMR" id="P27524"/>
<dbReference type="FunCoup" id="P27524">
    <property type="interactions" value="1118"/>
</dbReference>
<dbReference type="STRING" id="4081.P27524"/>
<dbReference type="PaxDb" id="4081-Solyc01g105030.2.1"/>
<dbReference type="EnsemblPlants" id="Solyc01g105030.3.1">
    <property type="protein sequence ID" value="Solyc01g105030.3.1"/>
    <property type="gene ID" value="Solyc01g105030.3"/>
</dbReference>
<dbReference type="GeneID" id="101256629"/>
<dbReference type="Gramene" id="Solyc01g105030.3.1">
    <property type="protein sequence ID" value="Solyc01g105030.3.1"/>
    <property type="gene ID" value="Solyc01g105030.3"/>
</dbReference>
<dbReference type="KEGG" id="sly:101256629"/>
<dbReference type="eggNOG" id="ENOG502QPRI">
    <property type="taxonomic scope" value="Eukaryota"/>
</dbReference>
<dbReference type="HOGENOM" id="CLU_057943_1_1_1"/>
<dbReference type="InParanoid" id="P27524"/>
<dbReference type="OMA" id="RFICMAT"/>
<dbReference type="OrthoDB" id="423598at2759"/>
<dbReference type="PhylomeDB" id="P27524"/>
<dbReference type="Proteomes" id="UP000004994">
    <property type="component" value="Chromosome 1"/>
</dbReference>
<dbReference type="GO" id="GO:0009535">
    <property type="term" value="C:chloroplast thylakoid membrane"/>
    <property type="evidence" value="ECO:0007669"/>
    <property type="project" value="UniProtKB-SubCell"/>
</dbReference>
<dbReference type="GO" id="GO:0009523">
    <property type="term" value="C:photosystem II"/>
    <property type="evidence" value="ECO:0007669"/>
    <property type="project" value="UniProtKB-KW"/>
</dbReference>
<dbReference type="GO" id="GO:0016168">
    <property type="term" value="F:chlorophyll binding"/>
    <property type="evidence" value="ECO:0007669"/>
    <property type="project" value="UniProtKB-KW"/>
</dbReference>
<dbReference type="GO" id="GO:0009768">
    <property type="term" value="P:photosynthesis, light harvesting in photosystem I"/>
    <property type="evidence" value="ECO:0000318"/>
    <property type="project" value="GO_Central"/>
</dbReference>
<dbReference type="GO" id="GO:0009416">
    <property type="term" value="P:response to light stimulus"/>
    <property type="evidence" value="ECO:0000318"/>
    <property type="project" value="GO_Central"/>
</dbReference>
<dbReference type="FunFam" id="1.10.3460.10:FF:000005">
    <property type="entry name" value="Chlorophyll a-b binding protein, chloroplastic"/>
    <property type="match status" value="1"/>
</dbReference>
<dbReference type="Gene3D" id="1.10.3460.10">
    <property type="entry name" value="Chlorophyll a/b binding protein domain"/>
    <property type="match status" value="1"/>
</dbReference>
<dbReference type="InterPro" id="IPR001344">
    <property type="entry name" value="Chloro_AB-bd_pln"/>
</dbReference>
<dbReference type="InterPro" id="IPR022796">
    <property type="entry name" value="Chloroa_b-bind"/>
</dbReference>
<dbReference type="PANTHER" id="PTHR21649">
    <property type="entry name" value="CHLOROPHYLL A/B BINDING PROTEIN"/>
    <property type="match status" value="1"/>
</dbReference>
<dbReference type="Pfam" id="PF00504">
    <property type="entry name" value="Chloroa_b-bind"/>
    <property type="match status" value="1"/>
</dbReference>
<dbReference type="SUPFAM" id="SSF103511">
    <property type="entry name" value="Chlorophyll a-b binding protein"/>
    <property type="match status" value="1"/>
</dbReference>